<name>RS28_SPOFR</name>
<dbReference type="EMBL" id="AF400224">
    <property type="protein sequence ID" value="AAK92196.1"/>
    <property type="molecule type" value="mRNA"/>
</dbReference>
<dbReference type="SMR" id="Q962Q2"/>
<dbReference type="EnsemblMetazoa" id="XM_035589135.2">
    <property type="protein sequence ID" value="XP_035445028.1"/>
    <property type="gene ID" value="LOC118272555"/>
</dbReference>
<dbReference type="OrthoDB" id="10258930at2759"/>
<dbReference type="Proteomes" id="UP000829999">
    <property type="component" value="Unplaced"/>
</dbReference>
<dbReference type="GO" id="GO:0098556">
    <property type="term" value="C:cytoplasmic side of rough endoplasmic reticulum membrane"/>
    <property type="evidence" value="ECO:0000250"/>
    <property type="project" value="UniProtKB"/>
</dbReference>
<dbReference type="GO" id="GO:0022627">
    <property type="term" value="C:cytosolic small ribosomal subunit"/>
    <property type="evidence" value="ECO:0000250"/>
    <property type="project" value="UniProtKB"/>
</dbReference>
<dbReference type="GO" id="GO:0005840">
    <property type="term" value="C:ribosome"/>
    <property type="evidence" value="ECO:0000250"/>
    <property type="project" value="UniProtKB"/>
</dbReference>
<dbReference type="GO" id="GO:0003735">
    <property type="term" value="F:structural constituent of ribosome"/>
    <property type="evidence" value="ECO:0007669"/>
    <property type="project" value="InterPro"/>
</dbReference>
<dbReference type="GO" id="GO:0002181">
    <property type="term" value="P:cytoplasmic translation"/>
    <property type="evidence" value="ECO:0000250"/>
    <property type="project" value="UniProtKB"/>
</dbReference>
<dbReference type="GO" id="GO:0030490">
    <property type="term" value="P:maturation of SSU-rRNA"/>
    <property type="evidence" value="ECO:0007669"/>
    <property type="project" value="TreeGrafter"/>
</dbReference>
<dbReference type="GO" id="GO:0000028">
    <property type="term" value="P:ribosomal small subunit assembly"/>
    <property type="evidence" value="ECO:0007669"/>
    <property type="project" value="TreeGrafter"/>
</dbReference>
<dbReference type="CDD" id="cd04457">
    <property type="entry name" value="S1_S28E"/>
    <property type="match status" value="1"/>
</dbReference>
<dbReference type="FunFam" id="2.40.50.140:FF:000025">
    <property type="entry name" value="40S ribosomal protein S28"/>
    <property type="match status" value="1"/>
</dbReference>
<dbReference type="Gene3D" id="2.40.50.140">
    <property type="entry name" value="Nucleic acid-binding proteins"/>
    <property type="match status" value="1"/>
</dbReference>
<dbReference type="HAMAP" id="MF_00292">
    <property type="entry name" value="Ribosomal_eS28"/>
    <property type="match status" value="1"/>
</dbReference>
<dbReference type="InterPro" id="IPR012340">
    <property type="entry name" value="NA-bd_OB-fold"/>
</dbReference>
<dbReference type="InterPro" id="IPR000289">
    <property type="entry name" value="Ribosomal_eS28"/>
</dbReference>
<dbReference type="InterPro" id="IPR028626">
    <property type="entry name" value="Ribosomal_eS28_CS"/>
</dbReference>
<dbReference type="PANTHER" id="PTHR10769">
    <property type="entry name" value="40S RIBOSOMAL PROTEIN S28"/>
    <property type="match status" value="1"/>
</dbReference>
<dbReference type="PANTHER" id="PTHR10769:SF3">
    <property type="entry name" value="SMALL RIBOSOMAL SUBUNIT PROTEIN ES28"/>
    <property type="match status" value="1"/>
</dbReference>
<dbReference type="Pfam" id="PF01200">
    <property type="entry name" value="Ribosomal_S28e"/>
    <property type="match status" value="1"/>
</dbReference>
<dbReference type="SUPFAM" id="SSF50249">
    <property type="entry name" value="Nucleic acid-binding proteins"/>
    <property type="match status" value="1"/>
</dbReference>
<dbReference type="PROSITE" id="PS00961">
    <property type="entry name" value="RIBOSOMAL_S28E"/>
    <property type="match status" value="1"/>
</dbReference>
<sequence length="65" mass="7318">MDKPNVLARVVKVLGRTGSQGQCTQVKVEFIGETSRQIIRNVKGPVRDGDILTLLESEREARRLR</sequence>
<keyword id="KW-0963">Cytoplasm</keyword>
<keyword id="KW-0256">Endoplasmic reticulum</keyword>
<keyword id="KW-0687">Ribonucleoprotein</keyword>
<keyword id="KW-0689">Ribosomal protein</keyword>
<comment type="subunit">
    <text evidence="2">Component of the 40S small ribosomal subunit.</text>
</comment>
<comment type="subcellular location">
    <subcellularLocation>
        <location evidence="1">Cytoplasm</location>
        <location evidence="1">Cytosol</location>
    </subcellularLocation>
    <subcellularLocation>
        <location evidence="1">Cytoplasm</location>
    </subcellularLocation>
    <subcellularLocation>
        <location evidence="2">Rough endoplasmic reticulum</location>
    </subcellularLocation>
    <text evidence="1 2">Detected on cytosolic polysomes (By similarity). Detected in ribosomes that are associated with the rough endoplasmic reticulum (By similarity).</text>
</comment>
<comment type="similarity">
    <text evidence="3">Belongs to the eukaryotic ribosomal protein eS28 family.</text>
</comment>
<reference key="1">
    <citation type="journal article" date="2003" name="Bioinformatics">
        <title>Annotation pattern of ESTs from Spodoptera frugiperda Sf9 cells and analysis of the ribosomal protein genes reveal insect-specific features and unexpectedly low codon usage bias.</title>
        <authorList>
            <person name="Landais I."/>
            <person name="Ogliastro M."/>
            <person name="Mita K."/>
            <person name="Nohata J."/>
            <person name="Lopez-Ferber M."/>
            <person name="Duonor-Cerutti M."/>
            <person name="Shimada T."/>
            <person name="Fournier P."/>
            <person name="Devauchelle G."/>
        </authorList>
    </citation>
    <scope>NUCLEOTIDE SEQUENCE [LARGE SCALE MRNA]</scope>
</reference>
<feature type="chain" id="PRO_0000136833" description="Small ribosomal subunit protein eS28">
    <location>
        <begin position="1"/>
        <end position="65"/>
    </location>
</feature>
<proteinExistence type="inferred from homology"/>
<protein>
    <recommendedName>
        <fullName evidence="3">Small ribosomal subunit protein eS28</fullName>
    </recommendedName>
    <alternativeName>
        <fullName>40S ribosomal protein S28</fullName>
    </alternativeName>
</protein>
<accession>Q962Q2</accession>
<evidence type="ECO:0000250" key="1">
    <source>
        <dbReference type="UniProtKB" id="P62857"/>
    </source>
</evidence>
<evidence type="ECO:0000250" key="2">
    <source>
        <dbReference type="UniProtKB" id="Q6QAT1"/>
    </source>
</evidence>
<evidence type="ECO:0000305" key="3"/>
<gene>
    <name type="primary">RpS28</name>
</gene>
<organism>
    <name type="scientific">Spodoptera frugiperda</name>
    <name type="common">Fall armyworm</name>
    <dbReference type="NCBI Taxonomy" id="7108"/>
    <lineage>
        <taxon>Eukaryota</taxon>
        <taxon>Metazoa</taxon>
        <taxon>Ecdysozoa</taxon>
        <taxon>Arthropoda</taxon>
        <taxon>Hexapoda</taxon>
        <taxon>Insecta</taxon>
        <taxon>Pterygota</taxon>
        <taxon>Neoptera</taxon>
        <taxon>Endopterygota</taxon>
        <taxon>Lepidoptera</taxon>
        <taxon>Glossata</taxon>
        <taxon>Ditrysia</taxon>
        <taxon>Noctuoidea</taxon>
        <taxon>Noctuidae</taxon>
        <taxon>Amphipyrinae</taxon>
        <taxon>Spodoptera</taxon>
    </lineage>
</organism>